<keyword id="KW-0963">Cytoplasm</keyword>
<keyword id="KW-0444">Lipid biosynthesis</keyword>
<keyword id="KW-0443">Lipid metabolism</keyword>
<keyword id="KW-0594">Phospholipid biosynthesis</keyword>
<keyword id="KW-1208">Phospholipid metabolism</keyword>
<keyword id="KW-0808">Transferase</keyword>
<proteinExistence type="inferred from homology"/>
<protein>
    <recommendedName>
        <fullName evidence="1">Phosphate acyltransferase</fullName>
        <ecNumber evidence="1">2.3.1.274</ecNumber>
    </recommendedName>
    <alternativeName>
        <fullName evidence="1">Acyl-ACP phosphotransacylase</fullName>
    </alternativeName>
    <alternativeName>
        <fullName evidence="1">Acyl-[acyl-carrier-protein]--phosphate acyltransferase</fullName>
    </alternativeName>
    <alternativeName>
        <fullName evidence="1">Phosphate-acyl-ACP acyltransferase</fullName>
    </alternativeName>
</protein>
<dbReference type="EC" id="2.3.1.274" evidence="1"/>
<dbReference type="EMBL" id="CP000738">
    <property type="protein sequence ID" value="ABR59684.1"/>
    <property type="molecule type" value="Genomic_DNA"/>
</dbReference>
<dbReference type="RefSeq" id="WP_011975024.1">
    <property type="nucleotide sequence ID" value="NC_009636.1"/>
</dbReference>
<dbReference type="RefSeq" id="YP_001326519.1">
    <property type="nucleotide sequence ID" value="NC_009636.1"/>
</dbReference>
<dbReference type="SMR" id="A6U7Q4"/>
<dbReference type="STRING" id="366394.Smed_0828"/>
<dbReference type="GeneID" id="61612402"/>
<dbReference type="KEGG" id="smd:Smed_0828"/>
<dbReference type="PATRIC" id="fig|366394.8.peg.3942"/>
<dbReference type="eggNOG" id="COG0416">
    <property type="taxonomic scope" value="Bacteria"/>
</dbReference>
<dbReference type="HOGENOM" id="CLU_039379_1_0_5"/>
<dbReference type="OrthoDB" id="9806408at2"/>
<dbReference type="UniPathway" id="UPA00085"/>
<dbReference type="Proteomes" id="UP000001108">
    <property type="component" value="Chromosome"/>
</dbReference>
<dbReference type="GO" id="GO:0005737">
    <property type="term" value="C:cytoplasm"/>
    <property type="evidence" value="ECO:0007669"/>
    <property type="project" value="UniProtKB-SubCell"/>
</dbReference>
<dbReference type="GO" id="GO:0043811">
    <property type="term" value="F:phosphate:acyl-[acyl carrier protein] acyltransferase activity"/>
    <property type="evidence" value="ECO:0007669"/>
    <property type="project" value="UniProtKB-UniRule"/>
</dbReference>
<dbReference type="GO" id="GO:0006633">
    <property type="term" value="P:fatty acid biosynthetic process"/>
    <property type="evidence" value="ECO:0007669"/>
    <property type="project" value="UniProtKB-UniRule"/>
</dbReference>
<dbReference type="GO" id="GO:0008654">
    <property type="term" value="P:phospholipid biosynthetic process"/>
    <property type="evidence" value="ECO:0007669"/>
    <property type="project" value="UniProtKB-KW"/>
</dbReference>
<dbReference type="Gene3D" id="3.40.718.10">
    <property type="entry name" value="Isopropylmalate Dehydrogenase"/>
    <property type="match status" value="1"/>
</dbReference>
<dbReference type="HAMAP" id="MF_00019">
    <property type="entry name" value="PlsX"/>
    <property type="match status" value="1"/>
</dbReference>
<dbReference type="InterPro" id="IPR003664">
    <property type="entry name" value="FA_synthesis"/>
</dbReference>
<dbReference type="InterPro" id="IPR012281">
    <property type="entry name" value="Phospholipid_synth_PlsX-like"/>
</dbReference>
<dbReference type="NCBIfam" id="TIGR00182">
    <property type="entry name" value="plsX"/>
    <property type="match status" value="1"/>
</dbReference>
<dbReference type="PANTHER" id="PTHR30100">
    <property type="entry name" value="FATTY ACID/PHOSPHOLIPID SYNTHESIS PROTEIN PLSX"/>
    <property type="match status" value="1"/>
</dbReference>
<dbReference type="PANTHER" id="PTHR30100:SF1">
    <property type="entry name" value="PHOSPHATE ACYLTRANSFERASE"/>
    <property type="match status" value="1"/>
</dbReference>
<dbReference type="Pfam" id="PF02504">
    <property type="entry name" value="FA_synthesis"/>
    <property type="match status" value="1"/>
</dbReference>
<dbReference type="PIRSF" id="PIRSF002465">
    <property type="entry name" value="Phsphlp_syn_PlsX"/>
    <property type="match status" value="1"/>
</dbReference>
<dbReference type="SUPFAM" id="SSF53659">
    <property type="entry name" value="Isocitrate/Isopropylmalate dehydrogenase-like"/>
    <property type="match status" value="1"/>
</dbReference>
<accession>A6U7Q4</accession>
<sequence>MVRISLDVMGGDYGPEVVIPGAARALERHPDIKFVLFGQEARCTELLAKHPKLQASSTFHDCEIAVGMDEKPSQALRRGRGKSSMWKAIDAINAHEADVVVSAGNTGALMAMSVFCLRTMQGIQRPAIAAIWPTLKGESIVLDVGATIGADAQQLMDFALMGGAMARALFEVERPSVGLLNVGVEEIKGQEEVKEAGRLIREADIEGIEYYGFVEGDDIGRGTVDVVVTEGFSGNIALKAAEGTARQIAEYLRAAMSRTLLAKIGYIFAKSAFDRLREKMDPRKVNGGVFLGLNGIVIKSHGGADAEGFAAAIDVGYDMVKNGLKAKIEADLARYHGAQASEALPRA</sequence>
<evidence type="ECO:0000255" key="1">
    <source>
        <dbReference type="HAMAP-Rule" id="MF_00019"/>
    </source>
</evidence>
<feature type="chain" id="PRO_1000001833" description="Phosphate acyltransferase">
    <location>
        <begin position="1"/>
        <end position="347"/>
    </location>
</feature>
<organism>
    <name type="scientific">Sinorhizobium medicae (strain WSM419)</name>
    <name type="common">Ensifer medicae</name>
    <dbReference type="NCBI Taxonomy" id="366394"/>
    <lineage>
        <taxon>Bacteria</taxon>
        <taxon>Pseudomonadati</taxon>
        <taxon>Pseudomonadota</taxon>
        <taxon>Alphaproteobacteria</taxon>
        <taxon>Hyphomicrobiales</taxon>
        <taxon>Rhizobiaceae</taxon>
        <taxon>Sinorhizobium/Ensifer group</taxon>
        <taxon>Sinorhizobium</taxon>
    </lineage>
</organism>
<gene>
    <name evidence="1" type="primary">plsX</name>
    <name type="ordered locus">Smed_0828</name>
</gene>
<reference key="1">
    <citation type="submission" date="2007-06" db="EMBL/GenBank/DDBJ databases">
        <title>Complete sequence of Sinorhizobium medicae WSM419 chromosome.</title>
        <authorList>
            <consortium name="US DOE Joint Genome Institute"/>
            <person name="Copeland A."/>
            <person name="Lucas S."/>
            <person name="Lapidus A."/>
            <person name="Barry K."/>
            <person name="Glavina del Rio T."/>
            <person name="Dalin E."/>
            <person name="Tice H."/>
            <person name="Pitluck S."/>
            <person name="Chain P."/>
            <person name="Malfatti S."/>
            <person name="Shin M."/>
            <person name="Vergez L."/>
            <person name="Schmutz J."/>
            <person name="Larimer F."/>
            <person name="Land M."/>
            <person name="Hauser L."/>
            <person name="Kyrpides N."/>
            <person name="Mikhailova N."/>
            <person name="Reeve W.G."/>
            <person name="Richardson P."/>
        </authorList>
    </citation>
    <scope>NUCLEOTIDE SEQUENCE [LARGE SCALE GENOMIC DNA]</scope>
    <source>
        <strain>WSM419</strain>
    </source>
</reference>
<name>PLSX_SINMW</name>
<comment type="function">
    <text evidence="1">Catalyzes the reversible formation of acyl-phosphate (acyl-PO(4)) from acyl-[acyl-carrier-protein] (acyl-ACP). This enzyme utilizes acyl-ACP as fatty acyl donor, but not acyl-CoA.</text>
</comment>
<comment type="catalytic activity">
    <reaction evidence="1">
        <text>a fatty acyl-[ACP] + phosphate = an acyl phosphate + holo-[ACP]</text>
        <dbReference type="Rhea" id="RHEA:42292"/>
        <dbReference type="Rhea" id="RHEA-COMP:9685"/>
        <dbReference type="Rhea" id="RHEA-COMP:14125"/>
        <dbReference type="ChEBI" id="CHEBI:43474"/>
        <dbReference type="ChEBI" id="CHEBI:59918"/>
        <dbReference type="ChEBI" id="CHEBI:64479"/>
        <dbReference type="ChEBI" id="CHEBI:138651"/>
        <dbReference type="EC" id="2.3.1.274"/>
    </reaction>
</comment>
<comment type="pathway">
    <text evidence="1">Lipid metabolism; phospholipid metabolism.</text>
</comment>
<comment type="subunit">
    <text evidence="1">Homodimer. Probably interacts with PlsY.</text>
</comment>
<comment type="subcellular location">
    <subcellularLocation>
        <location evidence="1">Cytoplasm</location>
    </subcellularLocation>
    <text evidence="1">Associated with the membrane possibly through PlsY.</text>
</comment>
<comment type="similarity">
    <text evidence="1">Belongs to the PlsX family.</text>
</comment>